<comment type="function">
    <text evidence="1">Required for disulfide bond formation in some periplasmic proteins. Acts by transferring its disulfide bond to other proteins and is reduced in the process (By similarity).</text>
</comment>
<comment type="subcellular location">
    <subcellularLocation>
        <location evidence="1">Periplasm</location>
    </subcellularLocation>
</comment>
<comment type="similarity">
    <text evidence="4">Belongs to the thioredoxin family. DsbC subfamily.</text>
</comment>
<reference key="1">
    <citation type="journal article" date="2003" name="Nat. Genet.">
        <title>Comparative analysis of the genome sequences of Bordetella pertussis, Bordetella parapertussis and Bordetella bronchiseptica.</title>
        <authorList>
            <person name="Parkhill J."/>
            <person name="Sebaihia M."/>
            <person name="Preston A."/>
            <person name="Murphy L.D."/>
            <person name="Thomson N.R."/>
            <person name="Harris D.E."/>
            <person name="Holden M.T.G."/>
            <person name="Churcher C.M."/>
            <person name="Bentley S.D."/>
            <person name="Mungall K.L."/>
            <person name="Cerdeno-Tarraga A.-M."/>
            <person name="Temple L."/>
            <person name="James K.D."/>
            <person name="Harris B."/>
            <person name="Quail M.A."/>
            <person name="Achtman M."/>
            <person name="Atkin R."/>
            <person name="Baker S."/>
            <person name="Basham D."/>
            <person name="Bason N."/>
            <person name="Cherevach I."/>
            <person name="Chillingworth T."/>
            <person name="Collins M."/>
            <person name="Cronin A."/>
            <person name="Davis P."/>
            <person name="Doggett J."/>
            <person name="Feltwell T."/>
            <person name="Goble A."/>
            <person name="Hamlin N."/>
            <person name="Hauser H."/>
            <person name="Holroyd S."/>
            <person name="Jagels K."/>
            <person name="Leather S."/>
            <person name="Moule S."/>
            <person name="Norberczak H."/>
            <person name="O'Neil S."/>
            <person name="Ormond D."/>
            <person name="Price C."/>
            <person name="Rabbinowitsch E."/>
            <person name="Rutter S."/>
            <person name="Sanders M."/>
            <person name="Saunders D."/>
            <person name="Seeger K."/>
            <person name="Sharp S."/>
            <person name="Simmonds M."/>
            <person name="Skelton J."/>
            <person name="Squares R."/>
            <person name="Squares S."/>
            <person name="Stevens K."/>
            <person name="Unwin L."/>
            <person name="Whitehead S."/>
            <person name="Barrell B.G."/>
            <person name="Maskell D.J."/>
        </authorList>
    </citation>
    <scope>NUCLEOTIDE SEQUENCE [LARGE SCALE GENOMIC DNA]</scope>
    <source>
        <strain>ATCC BAA-588 / NCTC 13252 / RB50</strain>
    </source>
</reference>
<keyword id="KW-1015">Disulfide bond</keyword>
<keyword id="KW-0574">Periplasm</keyword>
<keyword id="KW-0676">Redox-active center</keyword>
<keyword id="KW-0732">Signal</keyword>
<protein>
    <recommendedName>
        <fullName>Probable thiol:disulfide interchange protein DsbC</fullName>
    </recommendedName>
</protein>
<accession>Q7WEL4</accession>
<sequence length="279" mass="30683">MSGPPFSGAGMNFRITVWCAAAAVWSSGALAQDGAGQAAPGTPDKVYSTTGTAPAKPGDKVYSTRSAQAPDPQADAVKERFAQRFEGFDVTAVRRTPYGLFEVQIGTDLLYTDEKVTWVMEGPLIDALTRRDVTRERQEKLSSVPFDELPLDLAVKQVKGDGSRVMAVFEDPNCGYCKQLHRTLEDMDNITVYTFLYPILSPDSTTKVRDIWCASDPAKVWKDWMVRGQRPPTAECDAPVEQWLALGRQLMVRGTPAIFFKSGGRVSGALPRDELEARL</sequence>
<organism>
    <name type="scientific">Bordetella bronchiseptica (strain ATCC BAA-588 / NCTC 13252 / RB50)</name>
    <name type="common">Alcaligenes bronchisepticus</name>
    <dbReference type="NCBI Taxonomy" id="257310"/>
    <lineage>
        <taxon>Bacteria</taxon>
        <taxon>Pseudomonadati</taxon>
        <taxon>Pseudomonadota</taxon>
        <taxon>Betaproteobacteria</taxon>
        <taxon>Burkholderiales</taxon>
        <taxon>Alcaligenaceae</taxon>
        <taxon>Bordetella</taxon>
    </lineage>
</organism>
<dbReference type="EMBL" id="BX640451">
    <property type="protein sequence ID" value="CAE34982.1"/>
    <property type="molecule type" value="Genomic_DNA"/>
</dbReference>
<dbReference type="RefSeq" id="WP_003815375.1">
    <property type="nucleotide sequence ID" value="NC_002927.3"/>
</dbReference>
<dbReference type="SMR" id="Q7WEL4"/>
<dbReference type="GeneID" id="93205946"/>
<dbReference type="KEGG" id="bbr:BB4620"/>
<dbReference type="eggNOG" id="COG1651">
    <property type="taxonomic scope" value="Bacteria"/>
</dbReference>
<dbReference type="HOGENOM" id="CLU_083593_1_0_4"/>
<dbReference type="Proteomes" id="UP000001027">
    <property type="component" value="Chromosome"/>
</dbReference>
<dbReference type="GO" id="GO:0042597">
    <property type="term" value="C:periplasmic space"/>
    <property type="evidence" value="ECO:0007669"/>
    <property type="project" value="UniProtKB-SubCell"/>
</dbReference>
<dbReference type="CDD" id="cd03020">
    <property type="entry name" value="DsbA_DsbC_DsbG"/>
    <property type="match status" value="1"/>
</dbReference>
<dbReference type="Gene3D" id="3.10.450.70">
    <property type="entry name" value="Disulphide bond isomerase, DsbC/G, N-terminal"/>
    <property type="match status" value="1"/>
</dbReference>
<dbReference type="Gene3D" id="3.40.30.10">
    <property type="entry name" value="Glutaredoxin"/>
    <property type="match status" value="1"/>
</dbReference>
<dbReference type="InterPro" id="IPR033954">
    <property type="entry name" value="DiS-bond_Isoase_DsbC/G"/>
</dbReference>
<dbReference type="InterPro" id="IPR018950">
    <property type="entry name" value="DiS-bond_isomerase_DsbC/G_N"/>
</dbReference>
<dbReference type="InterPro" id="IPR009094">
    <property type="entry name" value="DiS-bond_isomerase_DsbC/G_N_sf"/>
</dbReference>
<dbReference type="InterPro" id="IPR051470">
    <property type="entry name" value="Thiol:disulfide_interchange"/>
</dbReference>
<dbReference type="InterPro" id="IPR012336">
    <property type="entry name" value="Thioredoxin-like_fold"/>
</dbReference>
<dbReference type="InterPro" id="IPR036249">
    <property type="entry name" value="Thioredoxin-like_sf"/>
</dbReference>
<dbReference type="InterPro" id="IPR017937">
    <property type="entry name" value="Thioredoxin_CS"/>
</dbReference>
<dbReference type="PANTHER" id="PTHR35272:SF3">
    <property type="entry name" value="THIOL:DISULFIDE INTERCHANGE PROTEIN DSBC"/>
    <property type="match status" value="1"/>
</dbReference>
<dbReference type="PANTHER" id="PTHR35272">
    <property type="entry name" value="THIOL:DISULFIDE INTERCHANGE PROTEIN DSBC-RELATED"/>
    <property type="match status" value="1"/>
</dbReference>
<dbReference type="Pfam" id="PF10411">
    <property type="entry name" value="DsbC_N"/>
    <property type="match status" value="1"/>
</dbReference>
<dbReference type="Pfam" id="PF13098">
    <property type="entry name" value="Thioredoxin_2"/>
    <property type="match status" value="1"/>
</dbReference>
<dbReference type="SUPFAM" id="SSF52833">
    <property type="entry name" value="Thioredoxin-like"/>
    <property type="match status" value="1"/>
</dbReference>
<dbReference type="PROSITE" id="PS00194">
    <property type="entry name" value="THIOREDOXIN_1"/>
    <property type="match status" value="1"/>
</dbReference>
<name>DSBC_BORBR</name>
<evidence type="ECO:0000250" key="1"/>
<evidence type="ECO:0000255" key="2"/>
<evidence type="ECO:0000256" key="3">
    <source>
        <dbReference type="SAM" id="MobiDB-lite"/>
    </source>
</evidence>
<evidence type="ECO:0000305" key="4"/>
<proteinExistence type="inferred from homology"/>
<gene>
    <name type="primary">dsbC</name>
    <name type="ordered locus">BB4620</name>
</gene>
<feature type="signal peptide" evidence="2">
    <location>
        <begin position="1"/>
        <end position="31"/>
    </location>
</feature>
<feature type="chain" id="PRO_0000245643" description="Probable thiol:disulfide interchange protein DsbC">
    <location>
        <begin position="32"/>
        <end position="279"/>
    </location>
</feature>
<feature type="region of interest" description="Disordered" evidence="3">
    <location>
        <begin position="33"/>
        <end position="74"/>
    </location>
</feature>
<feature type="compositionally biased region" description="Low complexity" evidence="3">
    <location>
        <begin position="33"/>
        <end position="44"/>
    </location>
</feature>
<feature type="disulfide bond" description="Redox-active" evidence="1">
    <location>
        <begin position="174"/>
        <end position="177"/>
    </location>
</feature>
<feature type="disulfide bond" evidence="1">
    <location>
        <begin position="213"/>
        <end position="236"/>
    </location>
</feature>